<evidence type="ECO:0000255" key="1">
    <source>
        <dbReference type="HAMAP-Rule" id="MF_01050"/>
    </source>
</evidence>
<evidence type="ECO:0000269" key="2">
    <source>
    </source>
</evidence>
<evidence type="ECO:0000269" key="3">
    <source>
    </source>
</evidence>
<evidence type="ECO:0000303" key="4">
    <source>
    </source>
</evidence>
<evidence type="ECO:0000305" key="5"/>
<evidence type="ECO:0000305" key="6">
    <source>
    </source>
</evidence>
<evidence type="ECO:0000305" key="7">
    <source>
    </source>
</evidence>
<evidence type="ECO:0000305" key="8">
    <source>
    </source>
</evidence>
<evidence type="ECO:0007829" key="9">
    <source>
        <dbReference type="PDB" id="1XA3"/>
    </source>
</evidence>
<evidence type="ECO:0007829" key="10">
    <source>
        <dbReference type="PDB" id="1XK7"/>
    </source>
</evidence>
<protein>
    <recommendedName>
        <fullName evidence="1">L-carnitine CoA-transferase</fullName>
        <ecNumber evidence="1 2">2.8.3.21</ecNumber>
    </recommendedName>
    <alternativeName>
        <fullName evidence="1">Crotonobetainyl-CoA:carnitine CoA-transferase</fullName>
    </alternativeName>
</protein>
<accession>P31572</accession>
<organism>
    <name type="scientific">Escherichia coli (strain K12)</name>
    <dbReference type="NCBI Taxonomy" id="83333"/>
    <lineage>
        <taxon>Bacteria</taxon>
        <taxon>Pseudomonadati</taxon>
        <taxon>Pseudomonadota</taxon>
        <taxon>Gammaproteobacteria</taxon>
        <taxon>Enterobacterales</taxon>
        <taxon>Enterobacteriaceae</taxon>
        <taxon>Escherichia</taxon>
    </lineage>
</organism>
<name>CAIB_ECOLI</name>
<sequence>MDHLPMPKFGPLAGLRVVFSGIEIAGPFAGQMFAEWGAEVIWIENVAWADTIRVQPNYPQLSRRNLHALSLNIFKDEGREAFLKLMETTDIFIEASKGPAFARRGITDEVLWQHNPKLVIAHLSGFGQYGTEEYTNLPAYNTIAQAFSGYLIQNGDVDQPMPAFPYTADYFSGLTATTAALAALHKVRETGKGESIDIAMYEVMLRMGQYFMMDYFNGGEMCPRMSKGKDPYYAGCGLYKCADGYIVMELVGITQIEECFKDIGLAHLLGTPEIPEGTQLIHRIECPYGPLVEEKLDAWLATHTIAEVKERFAELNIACAKVLTVPELESNPQYVARESITQWQTMDGRTCKGPNIMPKFKNNPGQIWRGMPSHGMDTAAILKNIGYSENDIQELVSKGLAKVED</sequence>
<proteinExistence type="evidence at protein level"/>
<feature type="chain" id="PRO_0000194708" description="L-carnitine CoA-transferase">
    <location>
        <begin position="1"/>
        <end position="405"/>
    </location>
</feature>
<feature type="active site" description="Nucleophile" evidence="1 7">
    <location>
        <position position="169"/>
    </location>
</feature>
<feature type="binding site" evidence="1 3">
    <location>
        <position position="97"/>
    </location>
    <ligand>
        <name>CoA</name>
        <dbReference type="ChEBI" id="CHEBI:57287"/>
    </ligand>
</feature>
<feature type="binding site" evidence="1 3">
    <location>
        <position position="104"/>
    </location>
    <ligand>
        <name>CoA</name>
        <dbReference type="ChEBI" id="CHEBI:57287"/>
    </ligand>
</feature>
<feature type="sequence variant" description="In strain: O44:K74.">
    <original>V</original>
    <variation>A</variation>
    <location>
        <position position="187"/>
    </location>
</feature>
<feature type="sequence variant" description="In strain: O44:K74.">
    <original>T</original>
    <variation>A</variation>
    <location>
        <position position="302"/>
    </location>
</feature>
<feature type="turn" evidence="10">
    <location>
        <begin position="11"/>
        <end position="14"/>
    </location>
</feature>
<feature type="strand" evidence="10">
    <location>
        <begin position="16"/>
        <end position="20"/>
    </location>
</feature>
<feature type="helix" evidence="10">
    <location>
        <begin position="25"/>
        <end position="35"/>
    </location>
</feature>
<feature type="strand" evidence="10">
    <location>
        <begin position="39"/>
        <end position="44"/>
    </location>
</feature>
<feature type="strand" evidence="10">
    <location>
        <begin position="46"/>
        <end position="48"/>
    </location>
</feature>
<feature type="helix" evidence="10">
    <location>
        <begin position="51"/>
        <end position="54"/>
    </location>
</feature>
<feature type="strand" evidence="10">
    <location>
        <begin position="55"/>
        <end position="57"/>
    </location>
</feature>
<feature type="helix" evidence="10">
    <location>
        <begin position="58"/>
        <end position="62"/>
    </location>
</feature>
<feature type="turn" evidence="10">
    <location>
        <begin position="63"/>
        <end position="65"/>
    </location>
</feature>
<feature type="strand" evidence="10">
    <location>
        <begin position="67"/>
        <end position="71"/>
    </location>
</feature>
<feature type="strand" evidence="9">
    <location>
        <begin position="73"/>
        <end position="75"/>
    </location>
</feature>
<feature type="helix" evidence="10">
    <location>
        <begin position="76"/>
        <end position="86"/>
    </location>
</feature>
<feature type="strand" evidence="10">
    <location>
        <begin position="90"/>
        <end position="95"/>
    </location>
</feature>
<feature type="strand" evidence="10">
    <location>
        <begin position="97"/>
        <end position="99"/>
    </location>
</feature>
<feature type="helix" evidence="10">
    <location>
        <begin position="100"/>
        <end position="103"/>
    </location>
</feature>
<feature type="helix" evidence="10">
    <location>
        <begin position="108"/>
        <end position="114"/>
    </location>
</feature>
<feature type="strand" evidence="10">
    <location>
        <begin position="119"/>
        <end position="126"/>
    </location>
</feature>
<feature type="strand" evidence="10">
    <location>
        <begin position="128"/>
        <end position="130"/>
    </location>
</feature>
<feature type="turn" evidence="10">
    <location>
        <begin position="132"/>
        <end position="136"/>
    </location>
</feature>
<feature type="helix" evidence="10">
    <location>
        <begin position="141"/>
        <end position="147"/>
    </location>
</feature>
<feature type="helix" evidence="10">
    <location>
        <begin position="151"/>
        <end position="153"/>
    </location>
</feature>
<feature type="strand" evidence="10">
    <location>
        <begin position="154"/>
        <end position="156"/>
    </location>
</feature>
<feature type="turn" evidence="10">
    <location>
        <begin position="164"/>
        <end position="166"/>
    </location>
</feature>
<feature type="helix" evidence="10">
    <location>
        <begin position="167"/>
        <end position="190"/>
    </location>
</feature>
<feature type="strand" evidence="10">
    <location>
        <begin position="194"/>
        <end position="199"/>
    </location>
</feature>
<feature type="helix" evidence="10">
    <location>
        <begin position="200"/>
        <end position="207"/>
    </location>
</feature>
<feature type="helix" evidence="10">
    <location>
        <begin position="209"/>
        <end position="216"/>
    </location>
</feature>
<feature type="strand" evidence="10">
    <location>
        <begin position="231"/>
        <end position="233"/>
    </location>
</feature>
<feature type="strand" evidence="10">
    <location>
        <begin position="236"/>
        <end position="241"/>
    </location>
</feature>
<feature type="strand" evidence="10">
    <location>
        <begin position="244"/>
        <end position="249"/>
    </location>
</feature>
<feature type="helix" evidence="10">
    <location>
        <begin position="253"/>
        <end position="263"/>
    </location>
</feature>
<feature type="helix" evidence="10">
    <location>
        <begin position="266"/>
        <end position="268"/>
    </location>
</feature>
<feature type="strand" evidence="10">
    <location>
        <begin position="271"/>
        <end position="274"/>
    </location>
</feature>
<feature type="turn" evidence="10">
    <location>
        <begin position="283"/>
        <end position="285"/>
    </location>
</feature>
<feature type="helix" evidence="10">
    <location>
        <begin position="289"/>
        <end position="301"/>
    </location>
</feature>
<feature type="helix" evidence="10">
    <location>
        <begin position="305"/>
        <end position="314"/>
    </location>
</feature>
<feature type="strand" evidence="10">
    <location>
        <begin position="318"/>
        <end position="321"/>
    </location>
</feature>
<feature type="helix" evidence="10">
    <location>
        <begin position="325"/>
        <end position="327"/>
    </location>
</feature>
<feature type="helix" evidence="10">
    <location>
        <begin position="332"/>
        <end position="337"/>
    </location>
</feature>
<feature type="strand" evidence="10">
    <location>
        <begin position="340"/>
        <end position="344"/>
    </location>
</feature>
<feature type="strand" evidence="10">
    <location>
        <begin position="350"/>
        <end position="354"/>
    </location>
</feature>
<feature type="strand" evidence="10">
    <location>
        <begin position="361"/>
        <end position="363"/>
    </location>
</feature>
<feature type="turn" evidence="10">
    <location>
        <begin position="374"/>
        <end position="377"/>
    </location>
</feature>
<feature type="helix" evidence="10">
    <location>
        <begin position="378"/>
        <end position="384"/>
    </location>
</feature>
<feature type="helix" evidence="10">
    <location>
        <begin position="389"/>
        <end position="397"/>
    </location>
</feature>
<feature type="strand" evidence="10">
    <location>
        <begin position="400"/>
        <end position="402"/>
    </location>
</feature>
<comment type="function">
    <text evidence="1 2">Catalyzes the reversible transfer of the CoA moiety from gamma-butyrobetainyl-CoA to L-carnitine to generate L-carnitinyl-CoA and gamma-butyrobetaine. Is also able to catalyze the reversible transfer of the CoA moiety from gamma-butyrobetainyl-CoA or L-carnitinyl-CoA to crotonobetaine to generate crotonobetainyl-CoA.</text>
</comment>
<comment type="catalytic activity">
    <reaction evidence="1 2">
        <text>crotonobetainyl-CoA + (R)-carnitine = crotonobetaine + (R)-carnitinyl-CoA</text>
        <dbReference type="Rhea" id="RHEA:28526"/>
        <dbReference type="ChEBI" id="CHEBI:16347"/>
        <dbReference type="ChEBI" id="CHEBI:17237"/>
        <dbReference type="ChEBI" id="CHEBI:60932"/>
        <dbReference type="ChEBI" id="CHEBI:60933"/>
        <dbReference type="EC" id="2.8.3.21"/>
    </reaction>
</comment>
<comment type="catalytic activity">
    <reaction evidence="1 2">
        <text>4-(trimethylamino)butanoyl-CoA + (R)-carnitine = (R)-carnitinyl-CoA + 4-(trimethylamino)butanoate</text>
        <dbReference type="Rhea" id="RHEA:28418"/>
        <dbReference type="ChEBI" id="CHEBI:16244"/>
        <dbReference type="ChEBI" id="CHEBI:16347"/>
        <dbReference type="ChEBI" id="CHEBI:60932"/>
        <dbReference type="ChEBI" id="CHEBI:61513"/>
        <dbReference type="EC" id="2.8.3.21"/>
    </reaction>
</comment>
<comment type="pathway">
    <text evidence="1 2">Amine and polyamine metabolism; carnitine metabolism.</text>
</comment>
<comment type="subunit">
    <text evidence="1 3">Homodimer.</text>
</comment>
<comment type="subcellular location">
    <subcellularLocation>
        <location evidence="1">Cytoplasm</location>
    </subcellularLocation>
</comment>
<comment type="induction">
    <text>By L-carnitine or crotonobetaine.</text>
</comment>
<comment type="miscellaneous">
    <text evidence="6">Some strains of E.coli, such as ATCC 25922, can metabolize carnitine under aerobiosis.</text>
</comment>
<comment type="similarity">
    <text evidence="1 5">Belongs to the CoA-transferase III family. CaiB subfamily.</text>
</comment>
<comment type="caution">
    <text evidence="8">Was originally thought to be an L-carnitine dehydratase.</text>
</comment>
<dbReference type="EC" id="2.8.3.21" evidence="1 2"/>
<dbReference type="EMBL" id="X67748">
    <property type="protein sequence ID" value="CAA47971.1"/>
    <property type="molecule type" value="Genomic_DNA"/>
</dbReference>
<dbReference type="EMBL" id="X73904">
    <property type="protein sequence ID" value="CAA52112.1"/>
    <property type="molecule type" value="Genomic_DNA"/>
</dbReference>
<dbReference type="EMBL" id="U00096">
    <property type="protein sequence ID" value="AAC73149.1"/>
    <property type="molecule type" value="Genomic_DNA"/>
</dbReference>
<dbReference type="EMBL" id="AP009048">
    <property type="protein sequence ID" value="BAB96607.1"/>
    <property type="molecule type" value="Genomic_DNA"/>
</dbReference>
<dbReference type="PIR" id="S40559">
    <property type="entry name" value="S40559"/>
</dbReference>
<dbReference type="RefSeq" id="NP_414580.1">
    <property type="nucleotide sequence ID" value="NC_000913.3"/>
</dbReference>
<dbReference type="RefSeq" id="WP_000349936.1">
    <property type="nucleotide sequence ID" value="NZ_LN832404.1"/>
</dbReference>
<dbReference type="PDB" id="1XA3">
    <property type="method" value="X-ray"/>
    <property type="resolution" value="1.85 A"/>
    <property type="chains" value="A/B=2-405"/>
</dbReference>
<dbReference type="PDB" id="1XA4">
    <property type="method" value="X-ray"/>
    <property type="resolution" value="1.90 A"/>
    <property type="chains" value="A/B=2-405"/>
</dbReference>
<dbReference type="PDB" id="1XK6">
    <property type="method" value="X-ray"/>
    <property type="resolution" value="1.85 A"/>
    <property type="chains" value="A/B/C/D=1-405"/>
</dbReference>
<dbReference type="PDB" id="1XK7">
    <property type="method" value="X-ray"/>
    <property type="resolution" value="1.60 A"/>
    <property type="chains" value="A/B/C=1-405"/>
</dbReference>
<dbReference type="PDB" id="1XVT">
    <property type="method" value="X-ray"/>
    <property type="resolution" value="2.30 A"/>
    <property type="chains" value="A=1-405"/>
</dbReference>
<dbReference type="PDB" id="1XVU">
    <property type="method" value="X-ray"/>
    <property type="resolution" value="2.40 A"/>
    <property type="chains" value="A=1-405"/>
</dbReference>
<dbReference type="PDB" id="1XVV">
    <property type="method" value="X-ray"/>
    <property type="resolution" value="2.40 A"/>
    <property type="chains" value="A=1-405"/>
</dbReference>
<dbReference type="PDBsum" id="1XA3"/>
<dbReference type="PDBsum" id="1XA4"/>
<dbReference type="PDBsum" id="1XK6"/>
<dbReference type="PDBsum" id="1XK7"/>
<dbReference type="PDBsum" id="1XVT"/>
<dbReference type="PDBsum" id="1XVU"/>
<dbReference type="PDBsum" id="1XVV"/>
<dbReference type="SMR" id="P31572"/>
<dbReference type="BioGRID" id="4261584">
    <property type="interactions" value="17"/>
</dbReference>
<dbReference type="BioGRID" id="853245">
    <property type="interactions" value="1"/>
</dbReference>
<dbReference type="FunCoup" id="P31572">
    <property type="interactions" value="54"/>
</dbReference>
<dbReference type="IntAct" id="P31572">
    <property type="interactions" value="12"/>
</dbReference>
<dbReference type="STRING" id="511145.b0038"/>
<dbReference type="DrugBank" id="DB02516">
    <property type="generic name" value="(R)-carnitinyl-CoA betaine"/>
</dbReference>
<dbReference type="DrugBank" id="DB01992">
    <property type="generic name" value="Coenzyme A"/>
</dbReference>
<dbReference type="PaxDb" id="511145-b0038"/>
<dbReference type="EnsemblBacteria" id="AAC73149">
    <property type="protein sequence ID" value="AAC73149"/>
    <property type="gene ID" value="b0038"/>
</dbReference>
<dbReference type="GeneID" id="948997"/>
<dbReference type="KEGG" id="ecj:JW0037"/>
<dbReference type="KEGG" id="eco:b0038"/>
<dbReference type="KEGG" id="ecoc:C3026_00200"/>
<dbReference type="PATRIC" id="fig|1411691.4.peg.2245"/>
<dbReference type="EchoBASE" id="EB1520"/>
<dbReference type="eggNOG" id="COG1804">
    <property type="taxonomic scope" value="Bacteria"/>
</dbReference>
<dbReference type="HOGENOM" id="CLU_033975_2_0_6"/>
<dbReference type="InParanoid" id="P31572"/>
<dbReference type="OMA" id="HRPGFGT"/>
<dbReference type="OrthoDB" id="9058532at2"/>
<dbReference type="PhylomeDB" id="P31572"/>
<dbReference type="BioCyc" id="EcoCyc:CARNDEHYDRA-MONOMER"/>
<dbReference type="BioCyc" id="MetaCyc:CARNDEHYDRA-MONOMER"/>
<dbReference type="BRENDA" id="2.8.3.21">
    <property type="organism ID" value="2026"/>
</dbReference>
<dbReference type="UniPathway" id="UPA00117"/>
<dbReference type="EvolutionaryTrace" id="P31572"/>
<dbReference type="PRO" id="PR:P31572"/>
<dbReference type="Proteomes" id="UP000000625">
    <property type="component" value="Chromosome"/>
</dbReference>
<dbReference type="GO" id="GO:0005737">
    <property type="term" value="C:cytoplasm"/>
    <property type="evidence" value="ECO:0007669"/>
    <property type="project" value="UniProtKB-SubCell"/>
</dbReference>
<dbReference type="GO" id="GO:0008735">
    <property type="term" value="F:L-carnitine CoA-transferase activity"/>
    <property type="evidence" value="ECO:0000269"/>
    <property type="project" value="EcoliWiki"/>
</dbReference>
<dbReference type="GO" id="GO:0042413">
    <property type="term" value="P:carnitine catabolic process"/>
    <property type="evidence" value="ECO:0000269"/>
    <property type="project" value="EcoliWiki"/>
</dbReference>
<dbReference type="FunFam" id="3.30.1540.10:FF:000001">
    <property type="entry name" value="L-carnitine CoA-transferase"/>
    <property type="match status" value="1"/>
</dbReference>
<dbReference type="Gene3D" id="3.40.50.10540">
    <property type="entry name" value="Crotonobetainyl-coa:carnitine coa-transferase, domain 1"/>
    <property type="match status" value="1"/>
</dbReference>
<dbReference type="Gene3D" id="3.30.1540.10">
    <property type="entry name" value="formyl-coa transferase, domain 3"/>
    <property type="match status" value="1"/>
</dbReference>
<dbReference type="HAMAP" id="MF_01050">
    <property type="entry name" value="CaiB"/>
    <property type="match status" value="1"/>
</dbReference>
<dbReference type="InterPro" id="IPR050509">
    <property type="entry name" value="CoA-transferase_III"/>
</dbReference>
<dbReference type="InterPro" id="IPR023452">
    <property type="entry name" value="CoA-Trfase_CaiB"/>
</dbReference>
<dbReference type="InterPro" id="IPR003673">
    <property type="entry name" value="CoA-Trfase_fam_III"/>
</dbReference>
<dbReference type="InterPro" id="IPR044855">
    <property type="entry name" value="CoA-Trfase_III_dom3_sf"/>
</dbReference>
<dbReference type="InterPro" id="IPR023606">
    <property type="entry name" value="CoA-Trfase_III_dom_1_sf"/>
</dbReference>
<dbReference type="NCBIfam" id="NF002914">
    <property type="entry name" value="PRK03525.1"/>
    <property type="match status" value="1"/>
</dbReference>
<dbReference type="PANTHER" id="PTHR48228:SF6">
    <property type="entry name" value="L-CARNITINE COA-TRANSFERASE"/>
    <property type="match status" value="1"/>
</dbReference>
<dbReference type="PANTHER" id="PTHR48228">
    <property type="entry name" value="SUCCINYL-COA--D-CITRAMALATE COA-TRANSFERASE"/>
    <property type="match status" value="1"/>
</dbReference>
<dbReference type="Pfam" id="PF02515">
    <property type="entry name" value="CoA_transf_3"/>
    <property type="match status" value="1"/>
</dbReference>
<dbReference type="SUPFAM" id="SSF89796">
    <property type="entry name" value="CoA-transferase family III (CaiB/BaiF)"/>
    <property type="match status" value="1"/>
</dbReference>
<reference key="1">
    <citation type="journal article" date="1994" name="J. Bacteriol.">
        <title>Cloning, nucleotide sequence, and expression of the Escherichia coli gene encoding carnitine dehydratase.</title>
        <authorList>
            <person name="Eichler K."/>
            <person name="Schunck W.-H."/>
            <person name="Kleber H.-P."/>
            <person name="Mandrand-Berthelot M.-A."/>
        </authorList>
    </citation>
    <scope>NUCLEOTIDE SEQUENCE [GENOMIC DNA]</scope>
    <scope>PROTEIN SEQUENCE OF 1-19</scope>
    <source>
        <strain>O44:K74</strain>
    </source>
</reference>
<reference key="2">
    <citation type="journal article" date="1994" name="Mol. Microbiol.">
        <title>Molecular characterization of the cai operon necessary for carnitine metabolism in Escherichia coli.</title>
        <authorList>
            <person name="Eichler K."/>
            <person name="Bourgis F."/>
            <person name="Buchet A."/>
            <person name="Kleber H.-P."/>
            <person name="Mandrand-Berthelot M.-A."/>
        </authorList>
    </citation>
    <scope>NUCLEOTIDE SEQUENCE [GENOMIC DNA]</scope>
    <source>
        <strain>O44:K74</strain>
    </source>
</reference>
<reference key="3">
    <citation type="journal article" date="1992" name="Nucleic Acids Res.">
        <title>Systematic sequencing of the Escherichia coli genome: analysis of the 0-2.4 min region.</title>
        <authorList>
            <person name="Yura T."/>
            <person name="Mori H."/>
            <person name="Nagai H."/>
            <person name="Nagata T."/>
            <person name="Ishihama A."/>
            <person name="Fujita N."/>
            <person name="Isono K."/>
            <person name="Mizobuchi K."/>
            <person name="Nakata A."/>
        </authorList>
    </citation>
    <scope>NUCLEOTIDE SEQUENCE [LARGE SCALE GENOMIC DNA]</scope>
    <source>
        <strain>K12</strain>
    </source>
</reference>
<reference key="4">
    <citation type="journal article" date="1997" name="Science">
        <title>The complete genome sequence of Escherichia coli K-12.</title>
        <authorList>
            <person name="Blattner F.R."/>
            <person name="Plunkett G. III"/>
            <person name="Bloch C.A."/>
            <person name="Perna N.T."/>
            <person name="Burland V."/>
            <person name="Riley M."/>
            <person name="Collado-Vides J."/>
            <person name="Glasner J.D."/>
            <person name="Rode C.K."/>
            <person name="Mayhew G.F."/>
            <person name="Gregor J."/>
            <person name="Davis N.W."/>
            <person name="Kirkpatrick H.A."/>
            <person name="Goeden M.A."/>
            <person name="Rose D.J."/>
            <person name="Mau B."/>
            <person name="Shao Y."/>
        </authorList>
    </citation>
    <scope>NUCLEOTIDE SEQUENCE [LARGE SCALE GENOMIC DNA]</scope>
    <source>
        <strain>K12 / MG1655 / ATCC 47076</strain>
    </source>
</reference>
<reference key="5">
    <citation type="journal article" date="2006" name="Mol. Syst. Biol.">
        <title>Highly accurate genome sequences of Escherichia coli K-12 strains MG1655 and W3110.</title>
        <authorList>
            <person name="Hayashi K."/>
            <person name="Morooka N."/>
            <person name="Yamamoto Y."/>
            <person name="Fujita K."/>
            <person name="Isono K."/>
            <person name="Choi S."/>
            <person name="Ohtsubo E."/>
            <person name="Baba T."/>
            <person name="Wanner B.L."/>
            <person name="Mori H."/>
            <person name="Horiuchi T."/>
        </authorList>
    </citation>
    <scope>NUCLEOTIDE SEQUENCE [LARGE SCALE GENOMIC DNA]</scope>
    <source>
        <strain>K12 / W3110 / ATCC 27325 / DSM 5911</strain>
    </source>
</reference>
<reference key="6">
    <citation type="journal article" date="2001" name="Biochemistry">
        <title>Involvement of coenzyme A esters and two new enzymes, an enoyl-CoA hydratase and a CoA-transferase, in the hydration of crotonobetaine to L-carnitine by Escherichia coli.</title>
        <authorList>
            <person name="Elssner T."/>
            <person name="Engemann C."/>
            <person name="Baumgart K."/>
            <person name="Kleber H.-P."/>
        </authorList>
    </citation>
    <scope>FUNCTION</scope>
    <scope>CATALYTIC ACTIVITY</scope>
    <scope>PATHWAY</scope>
    <source>
        <strain>O44:K74</strain>
    </source>
</reference>
<reference key="7">
    <citation type="journal article" date="1999" name="FEMS Microbiol. Lett.">
        <title>Metabolism of L(-)-carnitine by Enterobacteriaceae under aerobic conditions.</title>
        <authorList>
            <person name="Elssner T."/>
            <person name="Preusser A."/>
            <person name="Wagner U."/>
            <person name="Kleber H.-P."/>
        </authorList>
    </citation>
    <scope>ENZYME ACTIVITY UNDER AEROBIOSIS</scope>
    <source>
        <strain>ATCC 25922 / DSM 1103 / NCIB 12210</strain>
        <strain>O44:K74</strain>
    </source>
</reference>
<reference key="8">
    <citation type="journal article" date="2004" name="Biochemistry">
        <title>Crystal structure of CaiB, a type-III CoA transferase in carnitine metabolism.</title>
        <authorList>
            <person name="Stenmark P."/>
            <person name="Gurmu D."/>
            <person name="Nordlund P."/>
        </authorList>
    </citation>
    <scope>X-RAY CRYSTALLOGRAPHY (1.85 ANGSTROMS) IN COMPLEX WITH COENZYME A</scope>
    <scope>ACTIVE SITE</scope>
</reference>
<keyword id="KW-0002">3D-structure</keyword>
<keyword id="KW-0963">Cytoplasm</keyword>
<keyword id="KW-0903">Direct protein sequencing</keyword>
<keyword id="KW-1185">Reference proteome</keyword>
<keyword id="KW-0808">Transferase</keyword>
<gene>
    <name evidence="1 4" type="primary">caiB</name>
    <name type="synonym">yaaN</name>
    <name type="ordered locus">b0038</name>
    <name type="ordered locus">JW0037</name>
</gene>